<name>ANGR_VIBA7</name>
<protein>
    <recommendedName>
        <fullName>Anguibactin system regulator</fullName>
    </recommendedName>
</protein>
<feature type="chain" id="PRO_0000417119" description="Anguibactin system regulator">
    <location>
        <begin position="1"/>
        <end position="1048"/>
    </location>
</feature>
<feature type="domain" description="Carrier" evidence="1">
    <location>
        <begin position="965"/>
        <end position="1039"/>
    </location>
</feature>
<feature type="mutagenesis site" description="Does not produce anguibactin, impairs ability to grow under iron-limited conditions and decreases virulence." evidence="2">
    <original>V</original>
    <variation>D</variation>
    <location>
        <position position="151"/>
    </location>
</feature>
<feature type="mutagenesis site" description="Does not produce anguibactin, impairs ability to grow under iron-limited conditions and decreases virulence." evidence="2">
    <original>H</original>
    <variation>L</variation>
    <location>
        <position position="267"/>
    </location>
</feature>
<feature type="mutagenesis site" description="Increases anguibactin production. Does not affect ability to grow under iron-limited conditions. No change in virulence." evidence="2">
    <original>H</original>
    <variation>N</variation>
    <location>
        <position position="267"/>
    </location>
</feature>
<feature type="mutagenesis site" description="Decreases anguibactin production, decreases ability to grow under iron-limited conditions and decreases virulence." evidence="2">
    <original>H</original>
    <variation>Q</variation>
    <location>
        <position position="267"/>
    </location>
</feature>
<feature type="mutagenesis site" description="Does not produce anguibactin, impairs ability to grow under iron-limited conditions and decreases virulence." evidence="2">
    <original>Q</original>
    <variation>P</variation>
    <location>
        <position position="303"/>
    </location>
</feature>
<feature type="mutagenesis site" description="Does not produce anguibactin, impairs ability to grow under iron-limited conditions and decreases virulence." evidence="2">
    <original>K</original>
    <variation>F</variation>
    <variation>G</variation>
    <location>
        <position position="609"/>
    </location>
</feature>
<feature type="mutagenesis site" description="Does not produce anguibactin, impairs ability to grow under iron-limited conditions and decreases virulence." evidence="2">
    <original>V</original>
    <variation>K</variation>
    <location>
        <position position="852"/>
    </location>
</feature>
<feature type="mutagenesis site" description="Does not produce anguibactin, impairs ability to grow under iron-limited conditions and decreases virulence." evidence="2">
    <original>I</original>
    <variation>P</variation>
    <location>
        <position position="859"/>
    </location>
</feature>
<feature type="mutagenesis site" description="Does not produce anguibactin, impairs ability to grow under iron-limited conditions and decreases virulence." evidence="2">
    <original>T</original>
    <variation>P</variation>
    <location>
        <position position="888"/>
    </location>
</feature>
<feature type="mutagenesis site" description="Does not produce anguibactin, impairs ability to grow under iron-limited conditions and decreases virulence." evidence="2">
    <original>L</original>
    <variation>P</variation>
    <location>
        <position position="889"/>
    </location>
</feature>
<evidence type="ECO:0000255" key="1">
    <source>
        <dbReference type="PROSITE-ProRule" id="PRU00258"/>
    </source>
</evidence>
<evidence type="ECO:0000269" key="2">
    <source>
    </source>
</evidence>
<evidence type="ECO:0000269" key="3">
    <source>
    </source>
</evidence>
<evidence type="ECO:0000305" key="4"/>
<comment type="function">
    <text evidence="2 3">Bifunctional protein that plays an essential role in virulence. Plays a role in both production of the siderophore anguibactin and regulation of iron transport genes.</text>
</comment>
<comment type="pathway">
    <text evidence="2">Siderophore biosynthesis; anguibactin biosynthesis.</text>
</comment>
<comment type="induction">
    <text evidence="3">AngR transcription is regulated by iron.</text>
</comment>
<comment type="similarity">
    <text evidence="4">Belongs to the ATP-dependent AMP-binding enzyme family.</text>
</comment>
<comment type="caution">
    <text evidence="4">Lacks the conserved Ser at position 1000 required for covalent attachment of 4-phosphopantetheine.</text>
</comment>
<sequence>MNQNEHPFAFPETKLPLTSNQNWQLSTQRQRTEKKSITNFTYQEFDYENISRDTLERCLTTIIKHHPIFGAKLSDDFYLHFPSKTHIETFAVNDLSNALKQDIDKQLADTRSAVTKSRSQAIISIMFSILPKNIIRLHVRFNSVVVDNPSVTLFFEQLTQLLSGSPLSFLNQEQTISAYNHKVNNELLSVDLESARWNEYILTLPSSANLPTICEPEKLDETDITRRCITLSQRKWQQLVTVSKKHNVTPEITLASIFSTVLSLWGHQKYLMMRFDITKINDYTGIIGQFTEPLLVGMSGFEQSFLSLVKNNQKKFEEAYHYDVKVPVFQCVNKLSNISDSHRYPANITFSSELLNTNHSKKAVWGCRQSANTWLSLHAVIEQEQLVLQWDSQDAIFPKDMIKDMLHSYTDLLDLLSQKDVNWAQPLPTLLPKHQESIRNKINQQGDLELTKELLHQRFFKNVESTPNALAIIHGQESLDYITLASYAKSCAGALTEAGVKSGDRVAVTMNKGIGQIVAVLGILYAGAIYVPVSLDQPQERRESIYQGAGINVILINESDSKNSPSNDLFFFLDWQTAIKSEPMRSPQDVAPSQPAYIIYTSGSTGTPKGVVISHQGALNTCIAINRRYQIGKNDRVLALSALHFDLSVYDIFGLLSAGGTIVLVSELERRDPIAWCQAIEEHNVTMWNSVPALFDMLLTYATCFNSIAPSKLRLTMLSGDWIGLDLPQRYRNYRVDGQFIAMGGATEASIWSNVFDVEKVPMEWRSIPYGYPLPRQQYRVVDDLGRDCPDWVAGELWIGGDGIALGYFDDELKTQAQFLHIDGHAWYRTGDMGCYWPDGTLEFLGRRDKQVKVGGYRIELGEIEVALNNIPGVQRAVAIAVGNKDKTLAAFIVMDSEQAPIVTAPLDAEEVQLLLNKQLPNYMVPKRIIFLETFPLTANGKVDHKALTRMTNREKKTSQSINKPIITASEDRVAKIWNDVLGPTELYKSSDFFLSGGDAYNAIEVVKRCHKAGYLIKLSMLYRYSTIEAFAIIMDRCRLAPQEEAEL</sequence>
<reference key="1">
    <citation type="journal article" date="1990" name="Gene">
        <title>A regulatory gene, angR, of the iron uptake system of Vibrio anguillarum: similarity with phage P22 cro and regulation by iron.</title>
        <authorList>
            <person name="Farrell D.H."/>
            <person name="Mikesell P."/>
            <person name="Actis L.A."/>
            <person name="Crosa J.H."/>
        </authorList>
    </citation>
    <scope>NUCLEOTIDE SEQUENCE [GENOMIC DNA]</scope>
    <scope>FUNCTION</scope>
    <scope>INDUCTION</scope>
    <source>
        <strain>ATCC 68554 / 775</strain>
    </source>
</reference>
<reference key="2">
    <citation type="journal article" date="2003" name="J. Bacteriol.">
        <title>Complete sequence of virulence plasmid pJM1 from the marine fish pathogen Vibrio anguillarum strain 775.</title>
        <authorList>
            <person name="Di Lorenzo M."/>
            <person name="Stork M."/>
            <person name="Tolmasky M.E."/>
            <person name="Actis L.A."/>
            <person name="Farrell D."/>
            <person name="Welch T.J."/>
            <person name="Crosa L.M."/>
            <person name="Wertheimer A.M."/>
            <person name="Chen Q."/>
            <person name="Salinas P."/>
            <person name="Waldbeser L."/>
            <person name="Crosa J.H."/>
        </authorList>
    </citation>
    <scope>NUCLEOTIDE SEQUENCE [LARGE SCALE GENOMIC DNA]</scope>
    <source>
        <strain>ATCC 68554 / 775</strain>
    </source>
</reference>
<reference key="3">
    <citation type="journal article" date="2011" name="Infect. Immun.">
        <title>Complete genome sequence of the marine fish pathogen Vibrio anguillarum harboring the pJM1 virulence plasmid and genomic comparison with other virulent strains of V. anguillarum and V. ordalii.</title>
        <authorList>
            <person name="Naka H."/>
            <person name="Dias G.M."/>
            <person name="Thompson C.C."/>
            <person name="Dubay C."/>
            <person name="Thompson F.L."/>
            <person name="Crosa J.H."/>
        </authorList>
    </citation>
    <scope>NUCLEOTIDE SEQUENCE [LARGE SCALE GENOMIC DNA]</scope>
    <source>
        <strain>ATCC 68554 / 775</strain>
    </source>
</reference>
<reference key="4">
    <citation type="journal article" date="1999" name="Infect. Immun.">
        <title>Characterization of the angR gene of Vibrio anguillarum: essential role in virulence.</title>
        <authorList>
            <person name="Wertheimer A.M."/>
            <person name="Verweij W."/>
            <person name="Chen Q."/>
            <person name="Crosa L.M."/>
            <person name="Nagasawa M."/>
            <person name="Tolmasky M.E."/>
            <person name="Actis L.A."/>
            <person name="Crosa J.H."/>
        </authorList>
    </citation>
    <scope>FUNCTION</scope>
    <scope>PATHWAY</scope>
    <scope>MUTAGENESIS OF VAL-151; HIS-267; GLN-303; LYS-609; VAL-852; ILE-859; THR-888 AND LEU-889</scope>
    <source>
        <strain>ATCC 68554 / 775</strain>
    </source>
</reference>
<geneLocation type="plasmid">
    <name>pJM1</name>
</geneLocation>
<organism>
    <name type="scientific">Vibrio anguillarum (strain ATCC 68554 / 775)</name>
    <name type="common">Listonella anguillarum</name>
    <dbReference type="NCBI Taxonomy" id="882102"/>
    <lineage>
        <taxon>Bacteria</taxon>
        <taxon>Pseudomonadati</taxon>
        <taxon>Pseudomonadota</taxon>
        <taxon>Gammaproteobacteria</taxon>
        <taxon>Vibrionales</taxon>
        <taxon>Vibrionaceae</taxon>
        <taxon>Vibrio</taxon>
    </lineage>
</organism>
<gene>
    <name type="primary">angR</name>
</gene>
<keyword id="KW-0010">Activator</keyword>
<keyword id="KW-0238">DNA-binding</keyword>
<keyword id="KW-0406">Ion transport</keyword>
<keyword id="KW-0408">Iron</keyword>
<keyword id="KW-0410">Iron transport</keyword>
<keyword id="KW-0436">Ligase</keyword>
<keyword id="KW-0614">Plasmid</keyword>
<keyword id="KW-0804">Transcription</keyword>
<keyword id="KW-0805">Transcription regulation</keyword>
<keyword id="KW-0813">Transport</keyword>
<dbReference type="EMBL" id="M34504">
    <property type="protein sequence ID" value="AAA79860.1"/>
    <property type="molecule type" value="Genomic_DNA"/>
</dbReference>
<dbReference type="EMBL" id="AY312585">
    <property type="protein sequence ID" value="AAR12528.1"/>
    <property type="molecule type" value="Genomic_DNA"/>
</dbReference>
<dbReference type="PIR" id="JQ0416">
    <property type="entry name" value="YGVCAR"/>
</dbReference>
<dbReference type="RefSeq" id="NP_943553.1">
    <property type="nucleotide sequence ID" value="NC_005250.1"/>
</dbReference>
<dbReference type="RefSeq" id="WP_011154639.1">
    <property type="nucleotide sequence ID" value="NC_005250.1"/>
</dbReference>
<dbReference type="SMR" id="Q6W4T3"/>
<dbReference type="eggNOG" id="COG1020">
    <property type="taxonomic scope" value="Bacteria"/>
</dbReference>
<dbReference type="BioCyc" id="MetaCyc:MONOMER-20471"/>
<dbReference type="UniPathway" id="UPA00016"/>
<dbReference type="GO" id="GO:0005737">
    <property type="term" value="C:cytoplasm"/>
    <property type="evidence" value="ECO:0007669"/>
    <property type="project" value="TreeGrafter"/>
</dbReference>
<dbReference type="GO" id="GO:0003677">
    <property type="term" value="F:DNA binding"/>
    <property type="evidence" value="ECO:0007669"/>
    <property type="project" value="UniProtKB-KW"/>
</dbReference>
<dbReference type="GO" id="GO:0016874">
    <property type="term" value="F:ligase activity"/>
    <property type="evidence" value="ECO:0007669"/>
    <property type="project" value="UniProtKB-KW"/>
</dbReference>
<dbReference type="GO" id="GO:0031177">
    <property type="term" value="F:phosphopantetheine binding"/>
    <property type="evidence" value="ECO:0007669"/>
    <property type="project" value="TreeGrafter"/>
</dbReference>
<dbReference type="GO" id="GO:0043041">
    <property type="term" value="P:amino acid activation for nonribosomal peptide biosynthetic process"/>
    <property type="evidence" value="ECO:0007669"/>
    <property type="project" value="TreeGrafter"/>
</dbReference>
<dbReference type="GO" id="GO:0006826">
    <property type="term" value="P:iron ion transport"/>
    <property type="evidence" value="ECO:0007669"/>
    <property type="project" value="UniProtKB-KW"/>
</dbReference>
<dbReference type="GO" id="GO:0044550">
    <property type="term" value="P:secondary metabolite biosynthetic process"/>
    <property type="evidence" value="ECO:0007669"/>
    <property type="project" value="TreeGrafter"/>
</dbReference>
<dbReference type="CDD" id="cd12114">
    <property type="entry name" value="A_NRPS_TlmIV_like"/>
    <property type="match status" value="1"/>
</dbReference>
<dbReference type="CDD" id="cd20480">
    <property type="entry name" value="ArgR-Cyc_NRPS-like"/>
    <property type="match status" value="1"/>
</dbReference>
<dbReference type="FunFam" id="3.40.50.12780:FF:000012">
    <property type="entry name" value="Non-ribosomal peptide synthetase"/>
    <property type="match status" value="1"/>
</dbReference>
<dbReference type="Gene3D" id="3.30.300.30">
    <property type="match status" value="1"/>
</dbReference>
<dbReference type="Gene3D" id="1.10.1200.10">
    <property type="entry name" value="ACP-like"/>
    <property type="match status" value="1"/>
</dbReference>
<dbReference type="Gene3D" id="3.30.559.10">
    <property type="entry name" value="Chloramphenicol acetyltransferase-like domain"/>
    <property type="match status" value="1"/>
</dbReference>
<dbReference type="Gene3D" id="3.40.50.12780">
    <property type="entry name" value="N-terminal domain of ligase-like"/>
    <property type="match status" value="1"/>
</dbReference>
<dbReference type="Gene3D" id="3.30.559.30">
    <property type="entry name" value="Nonribosomal peptide synthetase, condensation domain"/>
    <property type="match status" value="1"/>
</dbReference>
<dbReference type="InterPro" id="IPR010071">
    <property type="entry name" value="AA_adenyl_dom"/>
</dbReference>
<dbReference type="InterPro" id="IPR036736">
    <property type="entry name" value="ACP-like_sf"/>
</dbReference>
<dbReference type="InterPro" id="IPR025110">
    <property type="entry name" value="AMP-bd_C"/>
</dbReference>
<dbReference type="InterPro" id="IPR045851">
    <property type="entry name" value="AMP-bd_C_sf"/>
</dbReference>
<dbReference type="InterPro" id="IPR020845">
    <property type="entry name" value="AMP-binding_CS"/>
</dbReference>
<dbReference type="InterPro" id="IPR000873">
    <property type="entry name" value="AMP-dep_synth/lig_dom"/>
</dbReference>
<dbReference type="InterPro" id="IPR042099">
    <property type="entry name" value="ANL_N_sf"/>
</dbReference>
<dbReference type="InterPro" id="IPR023213">
    <property type="entry name" value="CAT-like_dom_sf"/>
</dbReference>
<dbReference type="InterPro" id="IPR001242">
    <property type="entry name" value="Condensatn"/>
</dbReference>
<dbReference type="InterPro" id="IPR009081">
    <property type="entry name" value="PP-bd_ACP"/>
</dbReference>
<dbReference type="NCBIfam" id="TIGR01733">
    <property type="entry name" value="AA-adenyl-dom"/>
    <property type="match status" value="1"/>
</dbReference>
<dbReference type="PANTHER" id="PTHR45527">
    <property type="entry name" value="NONRIBOSOMAL PEPTIDE SYNTHETASE"/>
    <property type="match status" value="1"/>
</dbReference>
<dbReference type="PANTHER" id="PTHR45527:SF10">
    <property type="entry name" value="PYOCHELIN SYNTHASE PCHF"/>
    <property type="match status" value="1"/>
</dbReference>
<dbReference type="Pfam" id="PF00501">
    <property type="entry name" value="AMP-binding"/>
    <property type="match status" value="1"/>
</dbReference>
<dbReference type="Pfam" id="PF13193">
    <property type="entry name" value="AMP-binding_C"/>
    <property type="match status" value="1"/>
</dbReference>
<dbReference type="Pfam" id="PF00668">
    <property type="entry name" value="Condensation"/>
    <property type="match status" value="1"/>
</dbReference>
<dbReference type="Pfam" id="PF00550">
    <property type="entry name" value="PP-binding"/>
    <property type="match status" value="1"/>
</dbReference>
<dbReference type="SUPFAM" id="SSF56801">
    <property type="entry name" value="Acetyl-CoA synthetase-like"/>
    <property type="match status" value="1"/>
</dbReference>
<dbReference type="SUPFAM" id="SSF47336">
    <property type="entry name" value="ACP-like"/>
    <property type="match status" value="1"/>
</dbReference>
<dbReference type="SUPFAM" id="SSF52777">
    <property type="entry name" value="CoA-dependent acyltransferases"/>
    <property type="match status" value="2"/>
</dbReference>
<dbReference type="PROSITE" id="PS00455">
    <property type="entry name" value="AMP_BINDING"/>
    <property type="match status" value="1"/>
</dbReference>
<dbReference type="PROSITE" id="PS50075">
    <property type="entry name" value="CARRIER"/>
    <property type="match status" value="1"/>
</dbReference>
<accession>Q6W4T3</accession>
<accession>P19828</accession>
<proteinExistence type="evidence at protein level"/>